<evidence type="ECO:0000269" key="1">
    <source>
    </source>
</evidence>
<evidence type="ECO:0000303" key="2">
    <source>
    </source>
</evidence>
<evidence type="ECO:0000305" key="3"/>
<comment type="induction">
    <text evidence="1">By the herbicide dichlorprop [(R)-2-(2,4-dichlorophenoxy)propionate].</text>
</comment>
<comment type="miscellaneous">
    <text evidence="1">On the 2D-gel the determined pI of this protein is: 6.99, its MW is: 20.9 kDa.</text>
</comment>
<comment type="similarity">
    <text evidence="3">Belongs to the UPF0312 family.</text>
</comment>
<dbReference type="Gene3D" id="2.40.128.110">
    <property type="entry name" value="Lipid/polyisoprenoid-binding, YceI-like"/>
    <property type="match status" value="1"/>
</dbReference>
<dbReference type="InterPro" id="IPR007372">
    <property type="entry name" value="Lipid/polyisoprenoid-bd_YceI"/>
</dbReference>
<dbReference type="InterPro" id="IPR036761">
    <property type="entry name" value="TTHA0802/YceI-like_sf"/>
</dbReference>
<dbReference type="Pfam" id="PF04264">
    <property type="entry name" value="YceI"/>
    <property type="match status" value="1"/>
</dbReference>
<dbReference type="SUPFAM" id="SSF101874">
    <property type="entry name" value="YceI-like"/>
    <property type="match status" value="1"/>
</dbReference>
<feature type="chain" id="PRO_0000070363" description="UPF0312 protein">
    <location>
        <begin position="1"/>
        <end position="61" status="greater than"/>
    </location>
</feature>
<feature type="non-consecutive residues" evidence="2">
    <location>
        <begin position="30"/>
        <end position="31"/>
    </location>
</feature>
<feature type="non-consecutive residues" evidence="2">
    <location>
        <begin position="41"/>
        <end position="42"/>
    </location>
</feature>
<feature type="non-terminal residue" evidence="2">
    <location>
        <position position="61"/>
    </location>
</feature>
<protein>
    <recommendedName>
        <fullName>UPF0312 protein</fullName>
    </recommendedName>
</protein>
<reference evidence="3" key="1">
    <citation type="journal article" date="2004" name="Microbiology">
        <title>Regulation of catabolic enzymes during long-term exposure of Delftia acidovorans MC1 to chlorophenoxy herbicides.</title>
        <authorList>
            <person name="Benndorf D."/>
            <person name="Davidson I."/>
            <person name="Babel W."/>
        </authorList>
    </citation>
    <scope>PROTEIN SEQUENCE</scope>
    <scope>INDUCTION</scope>
    <source>
        <strain evidence="1">MC1</strain>
    </source>
</reference>
<name>U312_DELAC</name>
<accession>P83711</accession>
<organism evidence="3">
    <name type="scientific">Delftia acidovorans</name>
    <name type="common">Pseudomonas acidovorans</name>
    <name type="synonym">Comamonas acidovorans</name>
    <dbReference type="NCBI Taxonomy" id="80866"/>
    <lineage>
        <taxon>Bacteria</taxon>
        <taxon>Pseudomonadati</taxon>
        <taxon>Pseudomonadota</taxon>
        <taxon>Betaproteobacteria</taxon>
        <taxon>Burkholderiales</taxon>
        <taxon>Comamonadaceae</taxon>
        <taxon>Delftia</taxon>
    </lineage>
</organism>
<proteinExistence type="evidence at protein level"/>
<sequence>APATYAIDPTHTFATFEIDHNGASTNRVRFKSGTVEFDRXAKAETNGGDFEARIDRNAFGV</sequence>
<keyword id="KW-0903">Direct protein sequencing</keyword>